<organism>
    <name type="scientific">Saccharomyces cerevisiae (strain YJM789)</name>
    <name type="common">Baker's yeast</name>
    <dbReference type="NCBI Taxonomy" id="307796"/>
    <lineage>
        <taxon>Eukaryota</taxon>
        <taxon>Fungi</taxon>
        <taxon>Dikarya</taxon>
        <taxon>Ascomycota</taxon>
        <taxon>Saccharomycotina</taxon>
        <taxon>Saccharomycetes</taxon>
        <taxon>Saccharomycetales</taxon>
        <taxon>Saccharomycetaceae</taxon>
        <taxon>Saccharomyces</taxon>
    </lineage>
</organism>
<sequence length="167" mass="18693">MALSLGQFINVGGMVKDLKSFNFSVYGRWFGYINIILCIALGIANLFHVSGVIAFGIISIIQGLVILFIEIPFLLKICPLSDNFIEFIKRFETNGWRCLFYLAMAIIQYISIAVMATSLIVVAVGLTISSISYAVAYTKHQEFQNTNIIKNPTDDDFPHEAVVREML</sequence>
<dbReference type="EMBL" id="AAFW02000020">
    <property type="protein sequence ID" value="EDN64460.1"/>
    <property type="molecule type" value="Genomic_DNA"/>
</dbReference>
<dbReference type="GlyCosmos" id="A6ZMD0">
    <property type="glycosylation" value="1 site, No reported glycans"/>
</dbReference>
<dbReference type="HOGENOM" id="CLU_118698_1_0_1"/>
<dbReference type="Proteomes" id="UP000007060">
    <property type="component" value="Unassembled WGS sequence"/>
</dbReference>
<dbReference type="GO" id="GO:0000139">
    <property type="term" value="C:Golgi membrane"/>
    <property type="evidence" value="ECO:0007669"/>
    <property type="project" value="UniProtKB-SubCell"/>
</dbReference>
<dbReference type="GO" id="GO:0016192">
    <property type="term" value="P:vesicle-mediated transport"/>
    <property type="evidence" value="ECO:0007669"/>
    <property type="project" value="TreeGrafter"/>
</dbReference>
<dbReference type="InterPro" id="IPR019365">
    <property type="entry name" value="TVP18/Ca-channel_flower"/>
</dbReference>
<dbReference type="PANTHER" id="PTHR13314">
    <property type="entry name" value="CALCIUM CHANNEL FLOWER HOMOLOG"/>
    <property type="match status" value="1"/>
</dbReference>
<dbReference type="PANTHER" id="PTHR13314:SF2">
    <property type="entry name" value="CALCIUM CHANNEL FLOWER HOMOLOG"/>
    <property type="match status" value="1"/>
</dbReference>
<dbReference type="Pfam" id="PF10233">
    <property type="entry name" value="Cg6151-P"/>
    <property type="match status" value="1"/>
</dbReference>
<dbReference type="SMART" id="SM01077">
    <property type="entry name" value="Cg6151-P"/>
    <property type="match status" value="1"/>
</dbReference>
<feature type="chain" id="PRO_0000343029" description="Golgi apparatus membrane protein TVP18">
    <location>
        <begin position="1"/>
        <end position="167"/>
    </location>
</feature>
<feature type="transmembrane region" description="Helical" evidence="3">
    <location>
        <begin position="23"/>
        <end position="43"/>
    </location>
</feature>
<feature type="transmembrane region" description="Helical" evidence="3">
    <location>
        <begin position="49"/>
        <end position="69"/>
    </location>
</feature>
<feature type="transmembrane region" description="Helical" evidence="3">
    <location>
        <begin position="98"/>
        <end position="114"/>
    </location>
</feature>
<feature type="transmembrane region" description="Helical" evidence="3">
    <location>
        <begin position="121"/>
        <end position="137"/>
    </location>
</feature>
<feature type="modified residue" description="Phosphothreonine" evidence="2">
    <location>
        <position position="146"/>
    </location>
</feature>
<feature type="modified residue" description="Phosphothreonine" evidence="2">
    <location>
        <position position="153"/>
    </location>
</feature>
<feature type="glycosylation site" description="N-linked (GlcNAc...) asparagine" evidence="3">
    <location>
        <position position="22"/>
    </location>
</feature>
<protein>
    <recommendedName>
        <fullName>Golgi apparatus membrane protein TVP18</fullName>
    </recommendedName>
    <alternativeName>
        <fullName>TLG2 compartment vesicle protein of 18 kDa</fullName>
    </alternativeName>
</protein>
<comment type="function">
    <text evidence="1">Golgi membrane protein involved in vesicular trafficking.</text>
</comment>
<comment type="subunit">
    <text evidence="1">Interacts with TVP15 and YIP4.</text>
</comment>
<comment type="subcellular location">
    <subcellularLocation>
        <location evidence="1">Golgi apparatus membrane</location>
        <topology evidence="1">Multi-pass membrane protein</topology>
    </subcellularLocation>
</comment>
<comment type="similarity">
    <text evidence="4">Belongs to the TVP18 family.</text>
</comment>
<proteinExistence type="inferred from homology"/>
<keyword id="KW-0325">Glycoprotein</keyword>
<keyword id="KW-0333">Golgi apparatus</keyword>
<keyword id="KW-0472">Membrane</keyword>
<keyword id="KW-0597">Phosphoprotein</keyword>
<keyword id="KW-0812">Transmembrane</keyword>
<keyword id="KW-1133">Transmembrane helix</keyword>
<name>TVP18_YEAS7</name>
<gene>
    <name type="primary">TVP18</name>
    <name type="ORF">SCY_4242</name>
</gene>
<evidence type="ECO:0000250" key="1"/>
<evidence type="ECO:0000250" key="2">
    <source>
        <dbReference type="UniProtKB" id="Q04767"/>
    </source>
</evidence>
<evidence type="ECO:0000255" key="3"/>
<evidence type="ECO:0000305" key="4"/>
<reference key="1">
    <citation type="journal article" date="2007" name="Proc. Natl. Acad. Sci. U.S.A.">
        <title>Genome sequencing and comparative analysis of Saccharomyces cerevisiae strain YJM789.</title>
        <authorList>
            <person name="Wei W."/>
            <person name="McCusker J.H."/>
            <person name="Hyman R.W."/>
            <person name="Jones T."/>
            <person name="Ning Y."/>
            <person name="Cao Z."/>
            <person name="Gu Z."/>
            <person name="Bruno D."/>
            <person name="Miranda M."/>
            <person name="Nguyen M."/>
            <person name="Wilhelmy J."/>
            <person name="Komp C."/>
            <person name="Tamse R."/>
            <person name="Wang X."/>
            <person name="Jia P."/>
            <person name="Luedi P."/>
            <person name="Oefner P.J."/>
            <person name="David L."/>
            <person name="Dietrich F.S."/>
            <person name="Li Y."/>
            <person name="Davis R.W."/>
            <person name="Steinmetz L.M."/>
        </authorList>
    </citation>
    <scope>NUCLEOTIDE SEQUENCE [LARGE SCALE GENOMIC DNA]</scope>
    <source>
        <strain>YJM789</strain>
    </source>
</reference>
<accession>A6ZMD0</accession>